<name>HIS6_PROMT</name>
<protein>
    <recommendedName>
        <fullName evidence="1">Imidazole glycerol phosphate synthase subunit HisF</fullName>
        <ecNumber evidence="1">4.3.2.10</ecNumber>
    </recommendedName>
    <alternativeName>
        <fullName evidence="1">IGP synthase cyclase subunit</fullName>
    </alternativeName>
    <alternativeName>
        <fullName evidence="1">IGP synthase subunit HisF</fullName>
    </alternativeName>
    <alternativeName>
        <fullName evidence="1">ImGP synthase subunit HisF</fullName>
        <shortName evidence="1">IGPS subunit HisF</shortName>
    </alternativeName>
</protein>
<proteinExistence type="inferred from homology"/>
<reference key="1">
    <citation type="journal article" date="2007" name="PLoS Genet.">
        <title>Patterns and implications of gene gain and loss in the evolution of Prochlorococcus.</title>
        <authorList>
            <person name="Kettler G.C."/>
            <person name="Martiny A.C."/>
            <person name="Huang K."/>
            <person name="Zucker J."/>
            <person name="Coleman M.L."/>
            <person name="Rodrigue S."/>
            <person name="Chen F."/>
            <person name="Lapidus A."/>
            <person name="Ferriera S."/>
            <person name="Johnson J."/>
            <person name="Steglich C."/>
            <person name="Church G.M."/>
            <person name="Richardson P."/>
            <person name="Chisholm S.W."/>
        </authorList>
    </citation>
    <scope>NUCLEOTIDE SEQUENCE [LARGE SCALE GENOMIC DNA]</scope>
    <source>
        <strain>NATL2A</strain>
    </source>
</reference>
<gene>
    <name evidence="1" type="primary">hisF</name>
    <name type="ordered locus">PMN2A_1761</name>
</gene>
<feature type="chain" id="PRO_0000142202" description="Imidazole glycerol phosphate synthase subunit HisF">
    <location>
        <begin position="1"/>
        <end position="256"/>
    </location>
</feature>
<feature type="active site" evidence="1">
    <location>
        <position position="11"/>
    </location>
</feature>
<feature type="active site" evidence="1">
    <location>
        <position position="130"/>
    </location>
</feature>
<accession>Q46GY9</accession>
<sequence length="256" mass="27377">MVALRLIPCLDVSNGRVVKGVNFVGLRDAGDPVELGCRYSKAGADELVFLDITATYEKRSTLVDMVRRTSESVTIPFTVGGGISSLNGINELLRAGADKVSLNSSAVKDPSLISKGANRFGSQCIVVAIDAKKNKNIPNKWDVYVSGGRNNTGLDAIEWAEKVFEMGAGEILLTSMDGDGTQNGYDIELTKCIADKVPIPVIASGGAGCLRHIKEAFTLGKSSAALLASLLHDGQLTIREIKEYLIKENLPIRPIE</sequence>
<comment type="function">
    <text evidence="1">IGPS catalyzes the conversion of PRFAR and glutamine to IGP, AICAR and glutamate. The HisF subunit catalyzes the cyclization activity that produces IGP and AICAR from PRFAR using the ammonia provided by the HisH subunit.</text>
</comment>
<comment type="catalytic activity">
    <reaction evidence="1">
        <text>5-[(5-phospho-1-deoxy-D-ribulos-1-ylimino)methylamino]-1-(5-phospho-beta-D-ribosyl)imidazole-4-carboxamide + L-glutamine = D-erythro-1-(imidazol-4-yl)glycerol 3-phosphate + 5-amino-1-(5-phospho-beta-D-ribosyl)imidazole-4-carboxamide + L-glutamate + H(+)</text>
        <dbReference type="Rhea" id="RHEA:24793"/>
        <dbReference type="ChEBI" id="CHEBI:15378"/>
        <dbReference type="ChEBI" id="CHEBI:29985"/>
        <dbReference type="ChEBI" id="CHEBI:58278"/>
        <dbReference type="ChEBI" id="CHEBI:58359"/>
        <dbReference type="ChEBI" id="CHEBI:58475"/>
        <dbReference type="ChEBI" id="CHEBI:58525"/>
        <dbReference type="EC" id="4.3.2.10"/>
    </reaction>
</comment>
<comment type="pathway">
    <text evidence="1">Amino-acid biosynthesis; L-histidine biosynthesis; L-histidine from 5-phospho-alpha-D-ribose 1-diphosphate: step 5/9.</text>
</comment>
<comment type="subunit">
    <text evidence="1">Heterodimer of HisH and HisF.</text>
</comment>
<comment type="subcellular location">
    <subcellularLocation>
        <location evidence="1">Cytoplasm</location>
    </subcellularLocation>
</comment>
<comment type="similarity">
    <text evidence="1">Belongs to the HisA/HisF family.</text>
</comment>
<keyword id="KW-0028">Amino-acid biosynthesis</keyword>
<keyword id="KW-0963">Cytoplasm</keyword>
<keyword id="KW-0368">Histidine biosynthesis</keyword>
<keyword id="KW-0456">Lyase</keyword>
<keyword id="KW-1185">Reference proteome</keyword>
<organism>
    <name type="scientific">Prochlorococcus marinus (strain NATL2A)</name>
    <dbReference type="NCBI Taxonomy" id="59920"/>
    <lineage>
        <taxon>Bacteria</taxon>
        <taxon>Bacillati</taxon>
        <taxon>Cyanobacteriota</taxon>
        <taxon>Cyanophyceae</taxon>
        <taxon>Synechococcales</taxon>
        <taxon>Prochlorococcaceae</taxon>
        <taxon>Prochlorococcus</taxon>
    </lineage>
</organism>
<evidence type="ECO:0000255" key="1">
    <source>
        <dbReference type="HAMAP-Rule" id="MF_01013"/>
    </source>
</evidence>
<dbReference type="EC" id="4.3.2.10" evidence="1"/>
<dbReference type="EMBL" id="CP000095">
    <property type="protein sequence ID" value="AAZ59249.1"/>
    <property type="molecule type" value="Genomic_DNA"/>
</dbReference>
<dbReference type="RefSeq" id="WP_011294394.1">
    <property type="nucleotide sequence ID" value="NC_007335.2"/>
</dbReference>
<dbReference type="SMR" id="Q46GY9"/>
<dbReference type="STRING" id="59920.PMN2A_1761"/>
<dbReference type="KEGG" id="pmn:PMN2A_1761"/>
<dbReference type="HOGENOM" id="CLU_048577_4_0_3"/>
<dbReference type="OrthoDB" id="9781903at2"/>
<dbReference type="PhylomeDB" id="Q46GY9"/>
<dbReference type="UniPathway" id="UPA00031">
    <property type="reaction ID" value="UER00010"/>
</dbReference>
<dbReference type="Proteomes" id="UP000002535">
    <property type="component" value="Chromosome"/>
</dbReference>
<dbReference type="GO" id="GO:0005737">
    <property type="term" value="C:cytoplasm"/>
    <property type="evidence" value="ECO:0007669"/>
    <property type="project" value="UniProtKB-SubCell"/>
</dbReference>
<dbReference type="GO" id="GO:0000107">
    <property type="term" value="F:imidazoleglycerol-phosphate synthase activity"/>
    <property type="evidence" value="ECO:0007669"/>
    <property type="project" value="UniProtKB-UniRule"/>
</dbReference>
<dbReference type="GO" id="GO:0016829">
    <property type="term" value="F:lyase activity"/>
    <property type="evidence" value="ECO:0007669"/>
    <property type="project" value="UniProtKB-KW"/>
</dbReference>
<dbReference type="GO" id="GO:0000105">
    <property type="term" value="P:L-histidine biosynthetic process"/>
    <property type="evidence" value="ECO:0007669"/>
    <property type="project" value="UniProtKB-UniRule"/>
</dbReference>
<dbReference type="CDD" id="cd04731">
    <property type="entry name" value="HisF"/>
    <property type="match status" value="1"/>
</dbReference>
<dbReference type="FunFam" id="3.20.20.70:FF:000006">
    <property type="entry name" value="Imidazole glycerol phosphate synthase subunit HisF"/>
    <property type="match status" value="1"/>
</dbReference>
<dbReference type="Gene3D" id="3.20.20.70">
    <property type="entry name" value="Aldolase class I"/>
    <property type="match status" value="1"/>
</dbReference>
<dbReference type="HAMAP" id="MF_01013">
    <property type="entry name" value="HisF"/>
    <property type="match status" value="1"/>
</dbReference>
<dbReference type="InterPro" id="IPR013785">
    <property type="entry name" value="Aldolase_TIM"/>
</dbReference>
<dbReference type="InterPro" id="IPR006062">
    <property type="entry name" value="His_biosynth"/>
</dbReference>
<dbReference type="InterPro" id="IPR004651">
    <property type="entry name" value="HisF"/>
</dbReference>
<dbReference type="InterPro" id="IPR050064">
    <property type="entry name" value="IGPS_HisA/HisF"/>
</dbReference>
<dbReference type="InterPro" id="IPR011060">
    <property type="entry name" value="RibuloseP-bd_barrel"/>
</dbReference>
<dbReference type="NCBIfam" id="TIGR00735">
    <property type="entry name" value="hisF"/>
    <property type="match status" value="1"/>
</dbReference>
<dbReference type="PANTHER" id="PTHR21235:SF2">
    <property type="entry name" value="IMIDAZOLE GLYCEROL PHOSPHATE SYNTHASE HISHF"/>
    <property type="match status" value="1"/>
</dbReference>
<dbReference type="PANTHER" id="PTHR21235">
    <property type="entry name" value="IMIDAZOLE GLYCEROL PHOSPHATE SYNTHASE SUBUNIT HISF/H IGP SYNTHASE SUBUNIT HISF/H"/>
    <property type="match status" value="1"/>
</dbReference>
<dbReference type="Pfam" id="PF00977">
    <property type="entry name" value="His_biosynth"/>
    <property type="match status" value="1"/>
</dbReference>
<dbReference type="SUPFAM" id="SSF51366">
    <property type="entry name" value="Ribulose-phoshate binding barrel"/>
    <property type="match status" value="1"/>
</dbReference>